<comment type="function">
    <text evidence="1">Na(+)/H(+) antiporter that extrudes sodium in exchange for external protons.</text>
</comment>
<comment type="catalytic activity">
    <reaction evidence="1">
        <text>2 Na(+)(in) + 3 H(+)(out) = 2 Na(+)(out) + 3 H(+)(in)</text>
        <dbReference type="Rhea" id="RHEA:29247"/>
        <dbReference type="ChEBI" id="CHEBI:15378"/>
        <dbReference type="ChEBI" id="CHEBI:29101"/>
    </reaction>
    <physiologicalReaction direction="left-to-right" evidence="1">
        <dbReference type="Rhea" id="RHEA:29248"/>
    </physiologicalReaction>
</comment>
<comment type="subcellular location">
    <subcellularLocation>
        <location evidence="1">Cell inner membrane</location>
        <topology evidence="1">Multi-pass membrane protein</topology>
    </subcellularLocation>
</comment>
<comment type="similarity">
    <text evidence="1">Belongs to the NhaB Na(+)/H(+) (TC 2.A.34) antiporter family.</text>
</comment>
<feature type="chain" id="PRO_1000191549" description="Na(+)/H(+) antiporter NhaB">
    <location>
        <begin position="1"/>
        <end position="522"/>
    </location>
</feature>
<feature type="transmembrane region" description="Helical" evidence="1">
    <location>
        <begin position="13"/>
        <end position="33"/>
    </location>
</feature>
<feature type="transmembrane region" description="Helical" evidence="1">
    <location>
        <begin position="98"/>
        <end position="118"/>
    </location>
</feature>
<feature type="transmembrane region" description="Helical" evidence="1">
    <location>
        <begin position="140"/>
        <end position="160"/>
    </location>
</feature>
<feature type="transmembrane region" description="Helical" evidence="1">
    <location>
        <begin position="239"/>
        <end position="259"/>
    </location>
</feature>
<feature type="transmembrane region" description="Helical" evidence="1">
    <location>
        <begin position="304"/>
        <end position="324"/>
    </location>
</feature>
<feature type="transmembrane region" description="Helical" evidence="1">
    <location>
        <begin position="356"/>
        <end position="376"/>
    </location>
</feature>
<feature type="transmembrane region" description="Helical" evidence="1">
    <location>
        <begin position="390"/>
        <end position="410"/>
    </location>
</feature>
<feature type="transmembrane region" description="Helical" evidence="1">
    <location>
        <begin position="446"/>
        <end position="466"/>
    </location>
</feature>
<feature type="transmembrane region" description="Helical" evidence="1">
    <location>
        <begin position="477"/>
        <end position="497"/>
    </location>
</feature>
<name>NHAB_YERPG</name>
<reference key="1">
    <citation type="journal article" date="2010" name="J. Bacteriol.">
        <title>Genome sequence of the deep-rooted Yersinia pestis strain Angola reveals new insights into the evolution and pangenome of the plague bacterium.</title>
        <authorList>
            <person name="Eppinger M."/>
            <person name="Worsham P.L."/>
            <person name="Nikolich M.P."/>
            <person name="Riley D.R."/>
            <person name="Sebastian Y."/>
            <person name="Mou S."/>
            <person name="Achtman M."/>
            <person name="Lindler L.E."/>
            <person name="Ravel J."/>
        </authorList>
    </citation>
    <scope>NUCLEOTIDE SEQUENCE [LARGE SCALE GENOMIC DNA]</scope>
    <source>
        <strain>Angola</strain>
    </source>
</reference>
<dbReference type="EMBL" id="CP000901">
    <property type="protein sequence ID" value="ABX87160.1"/>
    <property type="molecule type" value="Genomic_DNA"/>
</dbReference>
<dbReference type="RefSeq" id="WP_012229677.1">
    <property type="nucleotide sequence ID" value="NC_010159.1"/>
</dbReference>
<dbReference type="SMR" id="A9R9D6"/>
<dbReference type="KEGG" id="ypg:YpAngola_A2364"/>
<dbReference type="PATRIC" id="fig|349746.12.peg.3377"/>
<dbReference type="GO" id="GO:0005886">
    <property type="term" value="C:plasma membrane"/>
    <property type="evidence" value="ECO:0007669"/>
    <property type="project" value="UniProtKB-SubCell"/>
</dbReference>
<dbReference type="GO" id="GO:0015385">
    <property type="term" value="F:sodium:proton antiporter activity"/>
    <property type="evidence" value="ECO:0007669"/>
    <property type="project" value="InterPro"/>
</dbReference>
<dbReference type="HAMAP" id="MF_01599">
    <property type="entry name" value="NhaB"/>
    <property type="match status" value="1"/>
</dbReference>
<dbReference type="InterPro" id="IPR004671">
    <property type="entry name" value="Na+/H+_antiporter_NhaB"/>
</dbReference>
<dbReference type="NCBIfam" id="TIGR00774">
    <property type="entry name" value="NhaB"/>
    <property type="match status" value="1"/>
</dbReference>
<dbReference type="NCBIfam" id="NF007093">
    <property type="entry name" value="PRK09547.1"/>
    <property type="match status" value="1"/>
</dbReference>
<dbReference type="PANTHER" id="PTHR43302:SF1">
    <property type="entry name" value="NA(+)_H(+) ANTIPORTER NHAB"/>
    <property type="match status" value="1"/>
</dbReference>
<dbReference type="PANTHER" id="PTHR43302">
    <property type="entry name" value="TRANSPORTER ARSB-RELATED"/>
    <property type="match status" value="1"/>
</dbReference>
<dbReference type="Pfam" id="PF06450">
    <property type="entry name" value="NhaB"/>
    <property type="match status" value="1"/>
</dbReference>
<organism>
    <name type="scientific">Yersinia pestis bv. Antiqua (strain Angola)</name>
    <dbReference type="NCBI Taxonomy" id="349746"/>
    <lineage>
        <taxon>Bacteria</taxon>
        <taxon>Pseudomonadati</taxon>
        <taxon>Pseudomonadota</taxon>
        <taxon>Gammaproteobacteria</taxon>
        <taxon>Enterobacterales</taxon>
        <taxon>Yersiniaceae</taxon>
        <taxon>Yersinia</taxon>
    </lineage>
</organism>
<protein>
    <recommendedName>
        <fullName evidence="1">Na(+)/H(+) antiporter NhaB</fullName>
    </recommendedName>
    <alternativeName>
        <fullName evidence="1">Sodium/proton antiporter NhaB</fullName>
    </alternativeName>
</protein>
<evidence type="ECO:0000255" key="1">
    <source>
        <dbReference type="HAMAP-Rule" id="MF_01599"/>
    </source>
</evidence>
<gene>
    <name evidence="1" type="primary">nhaB</name>
    <name type="ordered locus">YpAngola_A2364</name>
</gene>
<keyword id="KW-0050">Antiport</keyword>
<keyword id="KW-0997">Cell inner membrane</keyword>
<keyword id="KW-1003">Cell membrane</keyword>
<keyword id="KW-0406">Ion transport</keyword>
<keyword id="KW-0472">Membrane</keyword>
<keyword id="KW-0915">Sodium</keyword>
<keyword id="KW-0739">Sodium transport</keyword>
<keyword id="KW-0812">Transmembrane</keyword>
<keyword id="KW-1133">Transmembrane helix</keyword>
<keyword id="KW-0813">Transport</keyword>
<proteinExistence type="inferred from homology"/>
<accession>A9R9D6</accession>
<sequence length="522" mass="57292">MDITNRQAVLKNFLGNSPDWYKLAIMGFLIINPLVFFFVSPFVAGWMLVIEFIFTLAMALKCYPLQPGGLLAIQAVAIGMTSPHQVAEEIANNLEVLLLLVFMVAGIYFMKQLLLFVFTKLLLNIRSKTILSLAFCLASAFLSAFLDALTVIAVVISVSVGFYTIYHNVTSNHSDKDITDDSGIDNQDSHETLEQFRAFLRSLMMHAGVGTALGGVMTMVGEPQNLIIAKSAGWNFADFFIRMLPVTLPVFIFGLLVCLLVEKFKLFGYGAQLPERVRQVLTEYDQQANAKRTKQEKMKLIVQAIIGVWLVLALHLAEVGLVGLSVIILATSFCGITNEHSLGKAFQEALPFTALLTVFFAVVAVIIEQSLFTPIIQFVLQASPSAQLSLFYLFNGLLSSVSDNVFVGTVYINEARSAFEHGIVSLQQFELLAVAINTGTNLPSVATPNGQAAFLFLLTSALAPLIRLSYGRMVYMALPYTLVMTIVGLLGVEFLLVPMTEWLTQAGWISLPHITNGVAIPH</sequence>